<name>LTMS_EPIFF</name>
<accession>J7FJH0</accession>
<evidence type="ECO:0000255" key="1"/>
<evidence type="ECO:0000269" key="2">
    <source>
    </source>
</evidence>
<evidence type="ECO:0000269" key="3">
    <source>
    </source>
</evidence>
<evidence type="ECO:0000269" key="4">
    <source>
    </source>
</evidence>
<evidence type="ECO:0000269" key="5">
    <source>
    </source>
</evidence>
<evidence type="ECO:0000269" key="6">
    <source>
    </source>
</evidence>
<evidence type="ECO:0000303" key="7">
    <source>
    </source>
</evidence>
<evidence type="ECO:0000305" key="8"/>
<keyword id="KW-0472">Membrane</keyword>
<keyword id="KW-0732">Signal</keyword>
<keyword id="KW-0812">Transmembrane</keyword>
<keyword id="KW-1133">Transmembrane helix</keyword>
<protein>
    <recommendedName>
        <fullName evidence="7">Lolitrem B biosynthesis cluster protein S</fullName>
    </recommendedName>
</protein>
<feature type="signal peptide" evidence="1">
    <location>
        <begin position="1"/>
        <end position="27"/>
    </location>
</feature>
<feature type="chain" id="PRO_5003792126" description="Lolitrem B biosynthesis cluster protein S">
    <location>
        <begin position="28"/>
        <end position="283"/>
    </location>
</feature>
<feature type="transmembrane region" description="Helical" evidence="1">
    <location>
        <begin position="73"/>
        <end position="93"/>
    </location>
</feature>
<feature type="transmembrane region" description="Helical" evidence="1">
    <location>
        <begin position="112"/>
        <end position="132"/>
    </location>
</feature>
<feature type="transmembrane region" description="Helical" evidence="1">
    <location>
        <begin position="157"/>
        <end position="177"/>
    </location>
</feature>
<feature type="transmembrane region" description="Helical" evidence="1">
    <location>
        <begin position="219"/>
        <end position="239"/>
    </location>
</feature>
<feature type="transmembrane region" description="Helical" evidence="1">
    <location>
        <begin position="250"/>
        <end position="270"/>
    </location>
</feature>
<reference key="1">
    <citation type="journal article" date="2013" name="PLoS Genet.">
        <title>Plant-symbiotic fungi as chemical engineers: Multi-genome analysis of the Clavicipitaceae reveals dynamics of alkaloid loci.</title>
        <authorList>
            <person name="Schardl C.L."/>
            <person name="Young C.A."/>
            <person name="Hesse U."/>
            <person name="Amyotte S.G."/>
            <person name="Andreeva K."/>
            <person name="Calie P.J."/>
            <person name="Fleetwood D.J."/>
            <person name="Haws D.C."/>
            <person name="Moore N."/>
            <person name="Oeser B."/>
            <person name="Panaccione D.G."/>
            <person name="Schweri K.K."/>
            <person name="Voisey C.R."/>
            <person name="Farman M.L."/>
            <person name="Jaromczyk J.W."/>
            <person name="Roe B.A."/>
            <person name="O'Sullivan D.M."/>
            <person name="Scott B."/>
            <person name="Tudzynski P."/>
            <person name="An Z."/>
            <person name="Arnaoudova E.G."/>
            <person name="Bullock C.T."/>
            <person name="Charlton N.D."/>
            <person name="Chen L."/>
            <person name="Cox M."/>
            <person name="Dinkins R.D."/>
            <person name="Florea S."/>
            <person name="Glenn A.E."/>
            <person name="Gordon A."/>
            <person name="Gueldener U."/>
            <person name="Harris D.R."/>
            <person name="Hollin W."/>
            <person name="Jaromczyk J."/>
            <person name="Johnson R.D."/>
            <person name="Khan A.K."/>
            <person name="Leistner E."/>
            <person name="Leuchtmann A."/>
            <person name="Li C."/>
            <person name="Liu J."/>
            <person name="Liu J."/>
            <person name="Liu M."/>
            <person name="Mace W."/>
            <person name="Machado C."/>
            <person name="Nagabhyru P."/>
            <person name="Pan J."/>
            <person name="Schmid J."/>
            <person name="Sugawara K."/>
            <person name="Steiner U."/>
            <person name="Takach J.E."/>
            <person name="Tanaka E."/>
            <person name="Webb J.S."/>
            <person name="Wilson E.V."/>
            <person name="Wiseman J.L."/>
            <person name="Yoshida R."/>
            <person name="Zeng Z."/>
        </authorList>
    </citation>
    <scope>NUCLEOTIDE SEQUENCE [GENOMIC DNA]</scope>
    <scope>IDENTIFICATION</scope>
    <scope>FUNCTION</scope>
</reference>
<reference key="2">
    <citation type="journal article" date="2005" name="Mol. Genet. Genomics">
        <title>Molecular cloning and genetic analysis of a symbiosis-expressed gene cluster for lolitrem biosynthesis from a mutualistic endophyte of perennial ryegrass.</title>
        <authorList>
            <person name="Young C.A."/>
            <person name="Bryant M.K."/>
            <person name="Christensen M.J."/>
            <person name="Tapper B.A."/>
            <person name="Bryan G.T."/>
            <person name="Scott B."/>
        </authorList>
    </citation>
    <scope>FUNCTION</scope>
</reference>
<reference key="3">
    <citation type="journal article" date="2006" name="Fungal Genet. Biol.">
        <title>A complex gene cluster for indole-diterpene biosynthesis in the grass endophyte Neotyphodium lolii.</title>
        <authorList>
            <person name="Young C.A."/>
            <person name="Felitti S."/>
            <person name="Shields K."/>
            <person name="Spangenberg G."/>
            <person name="Johnson R.D."/>
            <person name="Bryan G.T."/>
            <person name="Saikia S."/>
            <person name="Scott B."/>
        </authorList>
    </citation>
    <scope>FUNCTION</scope>
</reference>
<reference key="4">
    <citation type="journal article" date="2010" name="Plant Physiol.">
        <title>Disruption of signaling in a fungal-grass symbiosis leads to pathogenesis.</title>
        <authorList>
            <person name="Eaton C.J."/>
            <person name="Cox M.P."/>
            <person name="Ambrose B."/>
            <person name="Becker M."/>
            <person name="Hesse U."/>
            <person name="Schardl C.L."/>
            <person name="Scott B."/>
        </authorList>
    </citation>
    <scope>INDUCTION</scope>
</reference>
<reference key="5">
    <citation type="journal article" date="2012" name="FEBS Lett.">
        <title>Functional analysis of an indole-diterpene gene cluster for lolitrem B biosynthesis in the grass endosymbiont Epichloe festucae.</title>
        <authorList>
            <person name="Saikia S."/>
            <person name="Takemoto D."/>
            <person name="Tapper B.A."/>
            <person name="Lane G.A."/>
            <person name="Fraser K."/>
            <person name="Scott B."/>
        </authorList>
    </citation>
    <scope>FUNCTION</scope>
</reference>
<dbReference type="EMBL" id="JN613320">
    <property type="protein sequence ID" value="AFO85412.1"/>
    <property type="molecule type" value="Genomic_DNA"/>
</dbReference>
<dbReference type="GO" id="GO:0016020">
    <property type="term" value="C:membrane"/>
    <property type="evidence" value="ECO:0007669"/>
    <property type="project" value="UniProtKB-SubCell"/>
</dbReference>
<comment type="function">
    <text evidence="2 3 5 6">Part of the gene cluster that mediates the biosynthesis of lolitrems, indole-diterpene mycotoxins that are potent tremorgens in mammals, and are synthesized by clavicipitaceous fungal endophytes in association with their grass hosts (PubMed:23468653). The geranylgeranyl diphosphate (GGPP) synthase ltmG is proposed to catalyze the first step in lolitrem biosynthesis (PubMed:15991026, PubMed:16765617). LtmG catalyzes a series of iterative condensations of isopentenyl diphosphate (IPP) with dimethylallyl diphosphate (DMAPP), geranyl diphosphate (GPP), and farnesyl diphosphate (FPP), to form GGPP (PubMed:15991026, PubMed:16765617). GGPP then condenses with indole-3-glycerol phosphate to form 3-geranylgeranylindole, an acyclic intermediate, to be incorporated into paxilline (PubMed:16765617). Either ltmG or ltmC could be responsible for this step, as both are putative prenyl transferases (PubMed:16765617). The FAD-dependent monooxygenase ltmM then catalyzes the epoxidation of the two terminal alkenes of the geranylgeranyl moiety, which is subsequently cyclized by ltmB, to paspaline (PubMed:15991026, PubMed:16765617). The cytochrome P450 monooxygenases ltmQ and ltmP can sequentially oxidize paspaline to terpendole E and terpendole F (PubMed:22750140). Alternatively, ltmP converts paspaline to an intermediate which is oxidized by ltmQ to terpendole F (PubMed:22750140). LtmF, ltmK, ltmE and ltmJ appear to be unique to the epichloe endophytes (PubMed:15991026, PubMed:16765617). The prenyltransferase ltmF is involved in the 27-hydroxyl-O-prenylation (PubMed:22750140). The cytochrome P450 monooxygenase ltmK is required for the oxidative acetal ring formation (PubMed:22750140). The multi-functional prenyltransferase ltmE is required for C20- and C21-prenylations of the indole ring of paspalanes and acts together with the cytochrome P450 monooxygenase ltmJ to yield lolitremanes by multiple oxidations and ring closures (PubMed:22750140). The stereoisomer pairs of lolitriol and lolitrem N or lolitrem B and lolitrem F may be attributed to variations in the way in which ring closure can occur under the action of ltmJ (PubMed:22750140). While the major product of this pathway is lolitrem B, the prenyl transferases and cytochrome P450 monooxygenases identified in this pathway have a remarkable versatility in their regio- and stereo-specificities to generate a diverse range of metabolites that are products of a metabolic grid rather than a linear pathway (PubMed:22750140).</text>
</comment>
<comment type="subcellular location">
    <subcellularLocation>
        <location evidence="1">Membrane</location>
        <topology evidence="1">Multi-pass membrane protein</topology>
    </subcellularLocation>
</comment>
<comment type="induction">
    <text evidence="4">Expression is down-regulated when the stress-activated mitogen-activated protein kinase (sakA) is deleted (PubMed:20519633).</text>
</comment>
<comment type="similarity">
    <text evidence="8">Belongs to the ltmS family.</text>
</comment>
<gene>
    <name evidence="7" type="primary">ltmS</name>
</gene>
<sequence>MSRSDWIFISLQGFFCLAGVIWKSREGYPIIDFPCPLQFIDSSDATLSYGTTSPWFGFRAVASMQSIWDNGPWFWLHLMLYIAQLVGLILIILHETVPHGAFLRKFESLAALGYLSYTVGLSTAFPVFSLWILNQYRAEKLVTAWPRRQEKAFLRTIFWCTGISHIGIFMVAIVATLLHRDATAPFHIGNSLLGVPDCSQFPCSEIAARHARLRQINEMTGTSSGFFLTVGLFSQALEAENKHLSLRVMVRMFFVSLIAGPAAGSADVLLLRDSITRSKKDCG</sequence>
<proteinExistence type="evidence at transcript level"/>
<organism>
    <name type="scientific">Epichloe festucae (strain Fl1)</name>
    <dbReference type="NCBI Taxonomy" id="877507"/>
    <lineage>
        <taxon>Eukaryota</taxon>
        <taxon>Fungi</taxon>
        <taxon>Dikarya</taxon>
        <taxon>Ascomycota</taxon>
        <taxon>Pezizomycotina</taxon>
        <taxon>Sordariomycetes</taxon>
        <taxon>Hypocreomycetidae</taxon>
        <taxon>Hypocreales</taxon>
        <taxon>Clavicipitaceae</taxon>
        <taxon>Epichloe</taxon>
    </lineage>
</organism>